<name>GPMI_CYAP4</name>
<dbReference type="EC" id="5.4.2.12" evidence="1"/>
<dbReference type="EMBL" id="CP001344">
    <property type="protein sequence ID" value="ACL46354.1"/>
    <property type="molecule type" value="Genomic_DNA"/>
</dbReference>
<dbReference type="SMR" id="B8HVP2"/>
<dbReference type="STRING" id="395961.Cyan7425_4040"/>
<dbReference type="KEGG" id="cyn:Cyan7425_4040"/>
<dbReference type="eggNOG" id="COG0696">
    <property type="taxonomic scope" value="Bacteria"/>
</dbReference>
<dbReference type="HOGENOM" id="CLU_026099_2_0_3"/>
<dbReference type="OrthoDB" id="9800863at2"/>
<dbReference type="UniPathway" id="UPA00109">
    <property type="reaction ID" value="UER00186"/>
</dbReference>
<dbReference type="GO" id="GO:0005829">
    <property type="term" value="C:cytosol"/>
    <property type="evidence" value="ECO:0007669"/>
    <property type="project" value="TreeGrafter"/>
</dbReference>
<dbReference type="GO" id="GO:0030145">
    <property type="term" value="F:manganese ion binding"/>
    <property type="evidence" value="ECO:0007669"/>
    <property type="project" value="UniProtKB-UniRule"/>
</dbReference>
<dbReference type="GO" id="GO:0004619">
    <property type="term" value="F:phosphoglycerate mutase activity"/>
    <property type="evidence" value="ECO:0007669"/>
    <property type="project" value="UniProtKB-EC"/>
</dbReference>
<dbReference type="GO" id="GO:0006007">
    <property type="term" value="P:glucose catabolic process"/>
    <property type="evidence" value="ECO:0007669"/>
    <property type="project" value="InterPro"/>
</dbReference>
<dbReference type="GO" id="GO:0006096">
    <property type="term" value="P:glycolytic process"/>
    <property type="evidence" value="ECO:0007669"/>
    <property type="project" value="UniProtKB-UniRule"/>
</dbReference>
<dbReference type="CDD" id="cd16010">
    <property type="entry name" value="iPGM"/>
    <property type="match status" value="1"/>
</dbReference>
<dbReference type="FunFam" id="3.40.1450.10:FF:000002">
    <property type="entry name" value="2,3-bisphosphoglycerate-independent phosphoglycerate mutase"/>
    <property type="match status" value="1"/>
</dbReference>
<dbReference type="Gene3D" id="3.40.720.10">
    <property type="entry name" value="Alkaline Phosphatase, subunit A"/>
    <property type="match status" value="1"/>
</dbReference>
<dbReference type="Gene3D" id="3.40.1450.10">
    <property type="entry name" value="BPG-independent phosphoglycerate mutase, domain B"/>
    <property type="match status" value="1"/>
</dbReference>
<dbReference type="HAMAP" id="MF_01038">
    <property type="entry name" value="GpmI"/>
    <property type="match status" value="1"/>
</dbReference>
<dbReference type="InterPro" id="IPR017850">
    <property type="entry name" value="Alkaline_phosphatase_core_sf"/>
</dbReference>
<dbReference type="InterPro" id="IPR011258">
    <property type="entry name" value="BPG-indep_PGM_N"/>
</dbReference>
<dbReference type="InterPro" id="IPR006124">
    <property type="entry name" value="Metalloenzyme"/>
</dbReference>
<dbReference type="InterPro" id="IPR036646">
    <property type="entry name" value="PGAM_B_sf"/>
</dbReference>
<dbReference type="InterPro" id="IPR005995">
    <property type="entry name" value="Pgm_bpd_ind"/>
</dbReference>
<dbReference type="NCBIfam" id="TIGR01307">
    <property type="entry name" value="pgm_bpd_ind"/>
    <property type="match status" value="1"/>
</dbReference>
<dbReference type="PANTHER" id="PTHR31637">
    <property type="entry name" value="2,3-BISPHOSPHOGLYCERATE-INDEPENDENT PHOSPHOGLYCERATE MUTASE"/>
    <property type="match status" value="1"/>
</dbReference>
<dbReference type="PANTHER" id="PTHR31637:SF0">
    <property type="entry name" value="2,3-BISPHOSPHOGLYCERATE-INDEPENDENT PHOSPHOGLYCERATE MUTASE"/>
    <property type="match status" value="1"/>
</dbReference>
<dbReference type="Pfam" id="PF06415">
    <property type="entry name" value="iPGM_N"/>
    <property type="match status" value="1"/>
</dbReference>
<dbReference type="Pfam" id="PF01676">
    <property type="entry name" value="Metalloenzyme"/>
    <property type="match status" value="1"/>
</dbReference>
<dbReference type="PIRSF" id="PIRSF001492">
    <property type="entry name" value="IPGAM"/>
    <property type="match status" value="1"/>
</dbReference>
<dbReference type="SUPFAM" id="SSF64158">
    <property type="entry name" value="2,3-Bisphosphoglycerate-independent phosphoglycerate mutase, substrate-binding domain"/>
    <property type="match status" value="1"/>
</dbReference>
<dbReference type="SUPFAM" id="SSF53649">
    <property type="entry name" value="Alkaline phosphatase-like"/>
    <property type="match status" value="1"/>
</dbReference>
<keyword id="KW-0324">Glycolysis</keyword>
<keyword id="KW-0413">Isomerase</keyword>
<keyword id="KW-0464">Manganese</keyword>
<keyword id="KW-0479">Metal-binding</keyword>
<comment type="function">
    <text evidence="1">Catalyzes the interconversion of 2-phosphoglycerate and 3-phosphoglycerate.</text>
</comment>
<comment type="catalytic activity">
    <reaction evidence="1">
        <text>(2R)-2-phosphoglycerate = (2R)-3-phosphoglycerate</text>
        <dbReference type="Rhea" id="RHEA:15901"/>
        <dbReference type="ChEBI" id="CHEBI:58272"/>
        <dbReference type="ChEBI" id="CHEBI:58289"/>
        <dbReference type="EC" id="5.4.2.12"/>
    </reaction>
</comment>
<comment type="cofactor">
    <cofactor evidence="1">
        <name>Mn(2+)</name>
        <dbReference type="ChEBI" id="CHEBI:29035"/>
    </cofactor>
    <text evidence="1">Binds 2 manganese ions per subunit.</text>
</comment>
<comment type="pathway">
    <text evidence="1">Carbohydrate degradation; glycolysis; pyruvate from D-glyceraldehyde 3-phosphate: step 3/5.</text>
</comment>
<comment type="subunit">
    <text evidence="1">Monomer.</text>
</comment>
<comment type="similarity">
    <text evidence="1">Belongs to the BPG-independent phosphoglycerate mutase family.</text>
</comment>
<gene>
    <name evidence="1" type="primary">gpmI</name>
    <name type="ordered locus">Cyan7425_4040</name>
</gene>
<proteinExistence type="inferred from homology"/>
<organism>
    <name type="scientific">Cyanothece sp. (strain PCC 7425 / ATCC 29141)</name>
    <dbReference type="NCBI Taxonomy" id="395961"/>
    <lineage>
        <taxon>Bacteria</taxon>
        <taxon>Bacillati</taxon>
        <taxon>Cyanobacteriota</taxon>
        <taxon>Cyanophyceae</taxon>
        <taxon>Gomontiellales</taxon>
        <taxon>Cyanothecaceae</taxon>
        <taxon>Cyanothece</taxon>
    </lineage>
</organism>
<reference key="1">
    <citation type="journal article" date="2011" name="MBio">
        <title>Novel metabolic attributes of the genus Cyanothece, comprising a group of unicellular nitrogen-fixing Cyanobacteria.</title>
        <authorList>
            <person name="Bandyopadhyay A."/>
            <person name="Elvitigala T."/>
            <person name="Welsh E."/>
            <person name="Stockel J."/>
            <person name="Liberton M."/>
            <person name="Min H."/>
            <person name="Sherman L.A."/>
            <person name="Pakrasi H.B."/>
        </authorList>
    </citation>
    <scope>NUCLEOTIDE SEQUENCE [LARGE SCALE GENOMIC DNA]</scope>
    <source>
        <strain>PCC 7425 / ATCC 29141</strain>
    </source>
</reference>
<sequence>MVLTPVSPVVLVILDGWGYREELVGNAIAAAHTPVMDSLWQAYPHTLVYTSGKAVGLPKGQMGNSEVGHLNLGAGRIVPQELVRISDAAEDGSLAANPALVQVYEGVKQRGTKLHLVGLCSDGGVHSHLDHLLALLDMAKSLGVTQVCVHAITDGRDTLPTEGKTFIQRLQDHLDRLEMGQIVTLSGRYYAMDRDRRWDRVERAYRVMTSDENIVDTPAWKILANGYAENITDEFLPPVRIAPGAIAAGDGVVFFNFRPDRARQLTQAFVDPNFKGFERSLISPLDFVTFTQYDASLSCAIAFPPQNLSNILGEVIAAKGLKQLRVAETEKYAHVTYFFNGGIEDPLPGEDRILVPSPMVATYDQAPAMSAAQVTQEVIAAVEKGVYSMVVVNYANPDMVGHTGQMKATIQALEAVDRCVGQLLQSVLQMGGTLLITADHGNAECMVDEQGNPWTAHTTNPVPFILVEGEGVKIPGHGTDVALRDDGCLADIAPTILEILRLPQPAEMTGRSLIQPLEVDLRPNRTPVRVRL</sequence>
<feature type="chain" id="PRO_1000149487" description="2,3-bisphosphoglycerate-independent phosphoglycerate mutase">
    <location>
        <begin position="1"/>
        <end position="532"/>
    </location>
</feature>
<feature type="active site" description="Phosphoserine intermediate" evidence="1">
    <location>
        <position position="65"/>
    </location>
</feature>
<feature type="binding site" evidence="1">
    <location>
        <position position="15"/>
    </location>
    <ligand>
        <name>Mn(2+)</name>
        <dbReference type="ChEBI" id="CHEBI:29035"/>
        <label>2</label>
    </ligand>
</feature>
<feature type="binding site" evidence="1">
    <location>
        <position position="65"/>
    </location>
    <ligand>
        <name>Mn(2+)</name>
        <dbReference type="ChEBI" id="CHEBI:29035"/>
        <label>2</label>
    </ligand>
</feature>
<feature type="binding site" evidence="1">
    <location>
        <position position="126"/>
    </location>
    <ligand>
        <name>substrate</name>
    </ligand>
</feature>
<feature type="binding site" evidence="1">
    <location>
        <begin position="156"/>
        <end position="157"/>
    </location>
    <ligand>
        <name>substrate</name>
    </ligand>
</feature>
<feature type="binding site" evidence="1">
    <location>
        <position position="188"/>
    </location>
    <ligand>
        <name>substrate</name>
    </ligand>
</feature>
<feature type="binding site" evidence="1">
    <location>
        <position position="194"/>
    </location>
    <ligand>
        <name>substrate</name>
    </ligand>
</feature>
<feature type="binding site" evidence="1">
    <location>
        <begin position="258"/>
        <end position="261"/>
    </location>
    <ligand>
        <name>substrate</name>
    </ligand>
</feature>
<feature type="binding site" evidence="1">
    <location>
        <position position="331"/>
    </location>
    <ligand>
        <name>substrate</name>
    </ligand>
</feature>
<feature type="binding site" evidence="1">
    <location>
        <position position="398"/>
    </location>
    <ligand>
        <name>Mn(2+)</name>
        <dbReference type="ChEBI" id="CHEBI:29035"/>
        <label>1</label>
    </ligand>
</feature>
<feature type="binding site" evidence="1">
    <location>
        <position position="402"/>
    </location>
    <ligand>
        <name>Mn(2+)</name>
        <dbReference type="ChEBI" id="CHEBI:29035"/>
        <label>1</label>
    </ligand>
</feature>
<feature type="binding site" evidence="1">
    <location>
        <position position="439"/>
    </location>
    <ligand>
        <name>Mn(2+)</name>
        <dbReference type="ChEBI" id="CHEBI:29035"/>
        <label>2</label>
    </ligand>
</feature>
<feature type="binding site" evidence="1">
    <location>
        <position position="440"/>
    </location>
    <ligand>
        <name>Mn(2+)</name>
        <dbReference type="ChEBI" id="CHEBI:29035"/>
        <label>2</label>
    </ligand>
</feature>
<feature type="binding site" evidence="1">
    <location>
        <position position="457"/>
    </location>
    <ligand>
        <name>Mn(2+)</name>
        <dbReference type="ChEBI" id="CHEBI:29035"/>
        <label>1</label>
    </ligand>
</feature>
<evidence type="ECO:0000255" key="1">
    <source>
        <dbReference type="HAMAP-Rule" id="MF_01038"/>
    </source>
</evidence>
<accession>B8HVP2</accession>
<protein>
    <recommendedName>
        <fullName evidence="1">2,3-bisphosphoglycerate-independent phosphoglycerate mutase</fullName>
        <shortName evidence="1">BPG-independent PGAM</shortName>
        <shortName evidence="1">Phosphoglyceromutase</shortName>
        <shortName evidence="1">iPGM</shortName>
        <ecNumber evidence="1">5.4.2.12</ecNumber>
    </recommendedName>
</protein>